<comment type="function">
    <text evidence="1">Catalyzes the transfer of a dimethylallyl group onto the adenine at position 37 in tRNAs that read codons beginning with uridine, leading to the formation of N6-(dimethylallyl)adenosine (i(6)A).</text>
</comment>
<comment type="catalytic activity">
    <reaction evidence="1">
        <text>adenosine(37) in tRNA + dimethylallyl diphosphate = N(6)-dimethylallyladenosine(37) in tRNA + diphosphate</text>
        <dbReference type="Rhea" id="RHEA:26482"/>
        <dbReference type="Rhea" id="RHEA-COMP:10162"/>
        <dbReference type="Rhea" id="RHEA-COMP:10375"/>
        <dbReference type="ChEBI" id="CHEBI:33019"/>
        <dbReference type="ChEBI" id="CHEBI:57623"/>
        <dbReference type="ChEBI" id="CHEBI:74411"/>
        <dbReference type="ChEBI" id="CHEBI:74415"/>
        <dbReference type="EC" id="2.5.1.75"/>
    </reaction>
</comment>
<comment type="cofactor">
    <cofactor evidence="1">
        <name>Mg(2+)</name>
        <dbReference type="ChEBI" id="CHEBI:18420"/>
    </cofactor>
</comment>
<comment type="subunit">
    <text evidence="1">Monomer.</text>
</comment>
<comment type="similarity">
    <text evidence="1">Belongs to the IPP transferase family.</text>
</comment>
<sequence>MTPRAIICLAGPTAAGKSASTLALAQRWPLEIINVDSATIYRGMDIGTAKPSAAERAQVPQHLLDIRDPAQSYSAAKFRADALRLIAEIHARGRIPLLAGGTMLYYKALREGLDDLPQADPALRAELEARAARLGWPALHAELALLDPATAARLSPNDSQRIQRALEICRLAGQPMSALLQGERRGDAPSPYRYVTLSLEPSERAALHARIAQRFDAMLAAGLVEEVRGLHARPDLHPGLPSVRCVGYRQMWSYLDGDIDLDTAREQGVAATRQLAKRQLTWLRAQPERVIIDCLAGDAVARTVDAMARALPD</sequence>
<dbReference type="EC" id="2.5.1.75" evidence="1"/>
<dbReference type="EMBL" id="BX640434">
    <property type="protein sequence ID" value="CAE38908.1"/>
    <property type="molecule type" value="Genomic_DNA"/>
</dbReference>
<dbReference type="RefSeq" id="WP_010929161.1">
    <property type="nucleotide sequence ID" value="NC_002928.3"/>
</dbReference>
<dbReference type="SMR" id="Q7U372"/>
<dbReference type="GeneID" id="93205412"/>
<dbReference type="KEGG" id="bpa:BPP3624"/>
<dbReference type="HOGENOM" id="CLU_032616_0_0_4"/>
<dbReference type="Proteomes" id="UP000001421">
    <property type="component" value="Chromosome"/>
</dbReference>
<dbReference type="GO" id="GO:0005524">
    <property type="term" value="F:ATP binding"/>
    <property type="evidence" value="ECO:0007669"/>
    <property type="project" value="UniProtKB-UniRule"/>
</dbReference>
<dbReference type="GO" id="GO:0052381">
    <property type="term" value="F:tRNA dimethylallyltransferase activity"/>
    <property type="evidence" value="ECO:0007669"/>
    <property type="project" value="UniProtKB-UniRule"/>
</dbReference>
<dbReference type="GO" id="GO:0006400">
    <property type="term" value="P:tRNA modification"/>
    <property type="evidence" value="ECO:0007669"/>
    <property type="project" value="TreeGrafter"/>
</dbReference>
<dbReference type="FunFam" id="1.10.20.140:FF:000001">
    <property type="entry name" value="tRNA dimethylallyltransferase"/>
    <property type="match status" value="1"/>
</dbReference>
<dbReference type="Gene3D" id="1.10.20.140">
    <property type="match status" value="1"/>
</dbReference>
<dbReference type="Gene3D" id="3.40.50.300">
    <property type="entry name" value="P-loop containing nucleotide triphosphate hydrolases"/>
    <property type="match status" value="1"/>
</dbReference>
<dbReference type="HAMAP" id="MF_00185">
    <property type="entry name" value="IPP_trans"/>
    <property type="match status" value="1"/>
</dbReference>
<dbReference type="InterPro" id="IPR039657">
    <property type="entry name" value="Dimethylallyltransferase"/>
</dbReference>
<dbReference type="InterPro" id="IPR018022">
    <property type="entry name" value="IPT"/>
</dbReference>
<dbReference type="InterPro" id="IPR027417">
    <property type="entry name" value="P-loop_NTPase"/>
</dbReference>
<dbReference type="NCBIfam" id="TIGR00174">
    <property type="entry name" value="miaA"/>
    <property type="match status" value="1"/>
</dbReference>
<dbReference type="PANTHER" id="PTHR11088">
    <property type="entry name" value="TRNA DIMETHYLALLYLTRANSFERASE"/>
    <property type="match status" value="1"/>
</dbReference>
<dbReference type="PANTHER" id="PTHR11088:SF60">
    <property type="entry name" value="TRNA DIMETHYLALLYLTRANSFERASE"/>
    <property type="match status" value="1"/>
</dbReference>
<dbReference type="Pfam" id="PF01715">
    <property type="entry name" value="IPPT"/>
    <property type="match status" value="1"/>
</dbReference>
<dbReference type="SUPFAM" id="SSF52540">
    <property type="entry name" value="P-loop containing nucleoside triphosphate hydrolases"/>
    <property type="match status" value="1"/>
</dbReference>
<protein>
    <recommendedName>
        <fullName evidence="1">tRNA dimethylallyltransferase</fullName>
        <ecNumber evidence="1">2.5.1.75</ecNumber>
    </recommendedName>
    <alternativeName>
        <fullName evidence="1">Dimethylallyl diphosphate:tRNA dimethylallyltransferase</fullName>
        <shortName evidence="1">DMAPP:tRNA dimethylallyltransferase</shortName>
        <shortName evidence="1">DMATase</shortName>
    </alternativeName>
    <alternativeName>
        <fullName evidence="1">Isopentenyl-diphosphate:tRNA isopentenyltransferase</fullName>
        <shortName evidence="1">IPP transferase</shortName>
        <shortName evidence="1">IPPT</shortName>
        <shortName evidence="1">IPTase</shortName>
    </alternativeName>
</protein>
<feature type="chain" id="PRO_0000163885" description="tRNA dimethylallyltransferase">
    <location>
        <begin position="1"/>
        <end position="313"/>
    </location>
</feature>
<feature type="region of interest" description="Interaction with substrate tRNA" evidence="1">
    <location>
        <begin position="36"/>
        <end position="39"/>
    </location>
</feature>
<feature type="region of interest" description="Interaction with substrate tRNA" evidence="1">
    <location>
        <begin position="160"/>
        <end position="164"/>
    </location>
</feature>
<feature type="region of interest" description="Interaction with substrate tRNA" evidence="1">
    <location>
        <begin position="244"/>
        <end position="249"/>
    </location>
</feature>
<feature type="binding site" evidence="1">
    <location>
        <begin position="11"/>
        <end position="18"/>
    </location>
    <ligand>
        <name>ATP</name>
        <dbReference type="ChEBI" id="CHEBI:30616"/>
    </ligand>
</feature>
<feature type="binding site" evidence="1">
    <location>
        <begin position="13"/>
        <end position="18"/>
    </location>
    <ligand>
        <name>substrate</name>
    </ligand>
</feature>
<feature type="site" description="Interaction with substrate tRNA" evidence="1">
    <location>
        <position position="102"/>
    </location>
</feature>
<feature type="site" description="Interaction with substrate tRNA" evidence="1">
    <location>
        <position position="124"/>
    </location>
</feature>
<accession>Q7U372</accession>
<keyword id="KW-0067">ATP-binding</keyword>
<keyword id="KW-0460">Magnesium</keyword>
<keyword id="KW-0547">Nucleotide-binding</keyword>
<keyword id="KW-0808">Transferase</keyword>
<keyword id="KW-0819">tRNA processing</keyword>
<evidence type="ECO:0000255" key="1">
    <source>
        <dbReference type="HAMAP-Rule" id="MF_00185"/>
    </source>
</evidence>
<proteinExistence type="inferred from homology"/>
<name>MIAA_BORPA</name>
<organism>
    <name type="scientific">Bordetella parapertussis (strain 12822 / ATCC BAA-587 / NCTC 13253)</name>
    <dbReference type="NCBI Taxonomy" id="257311"/>
    <lineage>
        <taxon>Bacteria</taxon>
        <taxon>Pseudomonadati</taxon>
        <taxon>Pseudomonadota</taxon>
        <taxon>Betaproteobacteria</taxon>
        <taxon>Burkholderiales</taxon>
        <taxon>Alcaligenaceae</taxon>
        <taxon>Bordetella</taxon>
    </lineage>
</organism>
<reference key="1">
    <citation type="journal article" date="2003" name="Nat. Genet.">
        <title>Comparative analysis of the genome sequences of Bordetella pertussis, Bordetella parapertussis and Bordetella bronchiseptica.</title>
        <authorList>
            <person name="Parkhill J."/>
            <person name="Sebaihia M."/>
            <person name="Preston A."/>
            <person name="Murphy L.D."/>
            <person name="Thomson N.R."/>
            <person name="Harris D.E."/>
            <person name="Holden M.T.G."/>
            <person name="Churcher C.M."/>
            <person name="Bentley S.D."/>
            <person name="Mungall K.L."/>
            <person name="Cerdeno-Tarraga A.-M."/>
            <person name="Temple L."/>
            <person name="James K.D."/>
            <person name="Harris B."/>
            <person name="Quail M.A."/>
            <person name="Achtman M."/>
            <person name="Atkin R."/>
            <person name="Baker S."/>
            <person name="Basham D."/>
            <person name="Bason N."/>
            <person name="Cherevach I."/>
            <person name="Chillingworth T."/>
            <person name="Collins M."/>
            <person name="Cronin A."/>
            <person name="Davis P."/>
            <person name="Doggett J."/>
            <person name="Feltwell T."/>
            <person name="Goble A."/>
            <person name="Hamlin N."/>
            <person name="Hauser H."/>
            <person name="Holroyd S."/>
            <person name="Jagels K."/>
            <person name="Leather S."/>
            <person name="Moule S."/>
            <person name="Norberczak H."/>
            <person name="O'Neil S."/>
            <person name="Ormond D."/>
            <person name="Price C."/>
            <person name="Rabbinowitsch E."/>
            <person name="Rutter S."/>
            <person name="Sanders M."/>
            <person name="Saunders D."/>
            <person name="Seeger K."/>
            <person name="Sharp S."/>
            <person name="Simmonds M."/>
            <person name="Skelton J."/>
            <person name="Squares R."/>
            <person name="Squares S."/>
            <person name="Stevens K."/>
            <person name="Unwin L."/>
            <person name="Whitehead S."/>
            <person name="Barrell B.G."/>
            <person name="Maskell D.J."/>
        </authorList>
    </citation>
    <scope>NUCLEOTIDE SEQUENCE [LARGE SCALE GENOMIC DNA]</scope>
    <source>
        <strain>12822 / ATCC BAA-587 / NCTC 13253</strain>
    </source>
</reference>
<gene>
    <name evidence="1" type="primary">miaA</name>
    <name type="ordered locus">BPP3624</name>
</gene>